<accession>P77690</accession>
<accession>Q8KRQ3</accession>
<dbReference type="EC" id="2.6.1.87" evidence="2"/>
<dbReference type="EMBL" id="AF527386">
    <property type="protein sequence ID" value="AAM92146.1"/>
    <property type="molecule type" value="Genomic_DNA"/>
</dbReference>
<dbReference type="EMBL" id="U00096">
    <property type="protein sequence ID" value="AAC75313.4"/>
    <property type="molecule type" value="Genomic_DNA"/>
</dbReference>
<dbReference type="EMBL" id="AP009048">
    <property type="protein sequence ID" value="BAA16076.2"/>
    <property type="molecule type" value="Genomic_DNA"/>
</dbReference>
<dbReference type="PIR" id="C64996">
    <property type="entry name" value="C64996"/>
</dbReference>
<dbReference type="RefSeq" id="NP_416756.5">
    <property type="nucleotide sequence ID" value="NC_000913.3"/>
</dbReference>
<dbReference type="SMR" id="P77690"/>
<dbReference type="BioGRID" id="4259180">
    <property type="interactions" value="246"/>
</dbReference>
<dbReference type="FunCoup" id="P77690">
    <property type="interactions" value="819"/>
</dbReference>
<dbReference type="STRING" id="511145.b2253"/>
<dbReference type="jPOST" id="P77690"/>
<dbReference type="PaxDb" id="511145-b2253"/>
<dbReference type="EnsemblBacteria" id="AAC75313">
    <property type="protein sequence ID" value="AAC75313"/>
    <property type="gene ID" value="b2253"/>
</dbReference>
<dbReference type="GeneID" id="947375"/>
<dbReference type="KEGG" id="ecj:JW5372"/>
<dbReference type="KEGG" id="eco:b2253"/>
<dbReference type="PATRIC" id="fig|511145.12.peg.2345"/>
<dbReference type="EchoBASE" id="EB3842"/>
<dbReference type="eggNOG" id="COG0399">
    <property type="taxonomic scope" value="Bacteria"/>
</dbReference>
<dbReference type="HOGENOM" id="CLU_033332_0_3_6"/>
<dbReference type="InParanoid" id="P77690"/>
<dbReference type="PhylomeDB" id="P77690"/>
<dbReference type="BioCyc" id="EcoCyc:G7166-MONOMER"/>
<dbReference type="BioCyc" id="MetaCyc:G7166-MONOMER"/>
<dbReference type="BRENDA" id="2.6.1.87">
    <property type="organism ID" value="2026"/>
</dbReference>
<dbReference type="UniPathway" id="UPA00030"/>
<dbReference type="UniPathway" id="UPA00032">
    <property type="reaction ID" value="UER00493"/>
</dbReference>
<dbReference type="PRO" id="PR:P77690"/>
<dbReference type="Proteomes" id="UP000000625">
    <property type="component" value="Chromosome"/>
</dbReference>
<dbReference type="GO" id="GO:0005737">
    <property type="term" value="C:cytoplasm"/>
    <property type="evidence" value="ECO:0000303"/>
    <property type="project" value="EcoCyc"/>
</dbReference>
<dbReference type="GO" id="GO:0016020">
    <property type="term" value="C:membrane"/>
    <property type="evidence" value="ECO:0007669"/>
    <property type="project" value="GOC"/>
</dbReference>
<dbReference type="GO" id="GO:0030170">
    <property type="term" value="F:pyridoxal phosphate binding"/>
    <property type="evidence" value="ECO:0000314"/>
    <property type="project" value="EcoCyc"/>
</dbReference>
<dbReference type="GO" id="GO:0008483">
    <property type="term" value="F:transaminase activity"/>
    <property type="evidence" value="ECO:0000318"/>
    <property type="project" value="GO_Central"/>
</dbReference>
<dbReference type="GO" id="GO:0099620">
    <property type="term" value="F:UDP-4-amino-4-deoxy-L-arabinose aminotransferase"/>
    <property type="evidence" value="ECO:0000314"/>
    <property type="project" value="EcoCyc"/>
</dbReference>
<dbReference type="GO" id="GO:0009245">
    <property type="term" value="P:lipid A biosynthetic process"/>
    <property type="evidence" value="ECO:0007669"/>
    <property type="project" value="UniProtKB-KW"/>
</dbReference>
<dbReference type="GO" id="GO:0009103">
    <property type="term" value="P:lipopolysaccharide biosynthetic process"/>
    <property type="evidence" value="ECO:0007669"/>
    <property type="project" value="UniProtKB-UniRule"/>
</dbReference>
<dbReference type="GO" id="GO:0000271">
    <property type="term" value="P:polysaccharide biosynthetic process"/>
    <property type="evidence" value="ECO:0000318"/>
    <property type="project" value="GO_Central"/>
</dbReference>
<dbReference type="GO" id="GO:0046677">
    <property type="term" value="P:response to antibiotic"/>
    <property type="evidence" value="ECO:0007669"/>
    <property type="project" value="UniProtKB-KW"/>
</dbReference>
<dbReference type="CDD" id="cd00616">
    <property type="entry name" value="AHBA_syn"/>
    <property type="match status" value="1"/>
</dbReference>
<dbReference type="FunFam" id="3.40.640.10:FF:000040">
    <property type="entry name" value="UDP-4-amino-4-deoxy-L-arabinose--oxoglutarate aminotransferase"/>
    <property type="match status" value="1"/>
</dbReference>
<dbReference type="FunFam" id="3.90.1150.10:FF:000030">
    <property type="entry name" value="UDP-4-amino-4-deoxy-L-arabinose--oxoglutarate aminotransferase"/>
    <property type="match status" value="1"/>
</dbReference>
<dbReference type="Gene3D" id="3.90.1150.10">
    <property type="entry name" value="Aspartate Aminotransferase, domain 1"/>
    <property type="match status" value="1"/>
</dbReference>
<dbReference type="Gene3D" id="3.40.640.10">
    <property type="entry name" value="Type I PLP-dependent aspartate aminotransferase-like (Major domain)"/>
    <property type="match status" value="1"/>
</dbReference>
<dbReference type="HAMAP" id="MF_01167">
    <property type="entry name" value="ArnB_transfer"/>
    <property type="match status" value="1"/>
</dbReference>
<dbReference type="InterPro" id="IPR022850">
    <property type="entry name" value="ArnB_NH2Trfase"/>
</dbReference>
<dbReference type="InterPro" id="IPR000653">
    <property type="entry name" value="DegT/StrS_aminotransferase"/>
</dbReference>
<dbReference type="InterPro" id="IPR015424">
    <property type="entry name" value="PyrdxlP-dep_Trfase"/>
</dbReference>
<dbReference type="InterPro" id="IPR015421">
    <property type="entry name" value="PyrdxlP-dep_Trfase_major"/>
</dbReference>
<dbReference type="InterPro" id="IPR015422">
    <property type="entry name" value="PyrdxlP-dep_Trfase_small"/>
</dbReference>
<dbReference type="NCBIfam" id="NF008658">
    <property type="entry name" value="PRK11658.1"/>
    <property type="match status" value="1"/>
</dbReference>
<dbReference type="PANTHER" id="PTHR30244">
    <property type="entry name" value="TRANSAMINASE"/>
    <property type="match status" value="1"/>
</dbReference>
<dbReference type="PANTHER" id="PTHR30244:SF41">
    <property type="entry name" value="UDP-4-AMINO-4-DEOXY-L-ARABINOSE--OXOGLUTARATE AMINOTRANSFERASE"/>
    <property type="match status" value="1"/>
</dbReference>
<dbReference type="Pfam" id="PF01041">
    <property type="entry name" value="DegT_DnrJ_EryC1"/>
    <property type="match status" value="1"/>
</dbReference>
<dbReference type="PIRSF" id="PIRSF000390">
    <property type="entry name" value="PLP_StrS"/>
    <property type="match status" value="1"/>
</dbReference>
<dbReference type="SUPFAM" id="SSF53383">
    <property type="entry name" value="PLP-dependent transferases"/>
    <property type="match status" value="1"/>
</dbReference>
<organism>
    <name type="scientific">Escherichia coli (strain K12)</name>
    <dbReference type="NCBI Taxonomy" id="83333"/>
    <lineage>
        <taxon>Bacteria</taxon>
        <taxon>Pseudomonadati</taxon>
        <taxon>Pseudomonadota</taxon>
        <taxon>Gammaproteobacteria</taxon>
        <taxon>Enterobacterales</taxon>
        <taxon>Enterobacteriaceae</taxon>
        <taxon>Escherichia</taxon>
    </lineage>
</organism>
<comment type="function">
    <text evidence="2">Catalyzes the conversion of UDP-4-keto-arabinose (UDP-Ara4O) to UDP-4-amino-4-deoxy-L-arabinose (UDP-L-Ara4N). The modified arabinose is attached to lipid A and is required for resistance to polymyxin and cationic antimicrobial peptides.</text>
</comment>
<comment type="catalytic activity">
    <reaction evidence="2">
        <text>UDP-4-amino-4-deoxy-beta-L-arabinose + 2-oxoglutarate = UDP-beta-L-threo-pentopyranos-4-ulose + L-glutamate</text>
        <dbReference type="Rhea" id="RHEA:24710"/>
        <dbReference type="ChEBI" id="CHEBI:16810"/>
        <dbReference type="ChEBI" id="CHEBI:29985"/>
        <dbReference type="ChEBI" id="CHEBI:58708"/>
        <dbReference type="ChEBI" id="CHEBI:58710"/>
        <dbReference type="EC" id="2.6.1.87"/>
    </reaction>
</comment>
<comment type="cofactor">
    <cofactor>
        <name>pyridoxal 5'-phosphate</name>
        <dbReference type="ChEBI" id="CHEBI:597326"/>
    </cofactor>
</comment>
<comment type="pathway">
    <text evidence="3">Nucleotide-sugar biosynthesis; UDP-4-deoxy-4-formamido-beta-L-arabinose biosynthesis; UDP-4-deoxy-4-formamido-beta-L-arabinose from UDP-alpha-D-glucuronate: step 2/3.</text>
</comment>
<comment type="pathway">
    <text evidence="3">Bacterial outer membrane biogenesis; lipopolysaccharide biosynthesis.</text>
</comment>
<comment type="subunit">
    <text evidence="1">Homodimer.</text>
</comment>
<comment type="induction">
    <text evidence="1">Induced by BasR.</text>
</comment>
<comment type="similarity">
    <text evidence="4">Belongs to the DegT/DnrJ/EryC1 family. ArnB subfamily.</text>
</comment>
<sequence length="385" mass="42238">MAEGKAMSEFLPFSRPAMGVEELAAVKEVLESGWITTGPKNQALEQAFCQLTGNQHAIAVSSATAGMHITLMALKIGKGDEVITPSLTWVSTLNMISLLGATPVMVDVDRDTLMVTPEAIESAITPRTKAIIPVHYAGAPADIDAIRAIGERYGIAVIEDAAHAVGTYYKGRHIGAKGTAIFSFHAIKNITCAEGGLIVTDNENLARQLRMLKFHGLGVDAYDRQTWGRAPQAEVLTPGYKYNLTDINAAIALTQLVKLEHLNTRRREIAQQYQQALAALPFQPLSLPAWPHVHAWHLFIIRVDEQRCGISRDALMEALKERGIGTGLHFRAAHTQKYYRERFPTLSLPNTEWNSERICSLPLFPDMTTADADHVITALQQLAGQ</sequence>
<name>ARNB_ECOLI</name>
<gene>
    <name type="primary">arnB</name>
    <name type="synonym">pmrH</name>
    <name type="synonym">yfbE</name>
    <name type="ordered locus">b2253</name>
    <name type="ordered locus">JW5372</name>
</gene>
<protein>
    <recommendedName>
        <fullName>UDP-4-amino-4-deoxy-L-arabinose--oxoglutarate aminotransferase</fullName>
        <ecNumber evidence="2">2.6.1.87</ecNumber>
    </recommendedName>
    <alternativeName>
        <fullName>Polymyxin resistance protein PmrH</fullName>
    </alternativeName>
    <alternativeName>
        <fullName>UDP-(beta-L-threo-pentapyranosyl-4''-ulose diphosphate) aminotransferase</fullName>
        <shortName>UDP-Ara4O aminotransferase</shortName>
    </alternativeName>
    <alternativeName>
        <fullName>UDP-4-amino-4-deoxy-L-arabinose aminotransferase</fullName>
    </alternativeName>
</protein>
<proteinExistence type="evidence at protein level"/>
<feature type="chain" id="PRO_0000110018" description="UDP-4-amino-4-deoxy-L-arabinose--oxoglutarate aminotransferase">
    <location>
        <begin position="1"/>
        <end position="385"/>
    </location>
</feature>
<feature type="modified residue" description="N6-(pyridoxal phosphate)lysine" evidence="1">
    <location>
        <position position="188"/>
    </location>
</feature>
<reference key="1">
    <citation type="journal article" date="2002" name="FASEB J.">
        <title>Enzymatic synthesis of novel UDP-sugars involved in the Escherichia coli modification of lipid A with 4-Amino-4-deoxy-L-arabinose.</title>
        <authorList>
            <person name="Breazeale S.D."/>
            <person name="Ribeiro A.A."/>
            <person name="McClerren A.L."/>
            <person name="Raetz C.R.H."/>
        </authorList>
    </citation>
    <scope>NUCLEOTIDE SEQUENCE [GENOMIC DNA]</scope>
</reference>
<reference key="2">
    <citation type="journal article" date="1997" name="DNA Res.">
        <title>Construction of a contiguous 874-kb sequence of the Escherichia coli-K12 genome corresponding to 50.0-68.8 min on the linkage map and analysis of its sequence features.</title>
        <authorList>
            <person name="Yamamoto Y."/>
            <person name="Aiba H."/>
            <person name="Baba T."/>
            <person name="Hayashi K."/>
            <person name="Inada T."/>
            <person name="Isono K."/>
            <person name="Itoh T."/>
            <person name="Kimura S."/>
            <person name="Kitagawa M."/>
            <person name="Makino K."/>
            <person name="Miki T."/>
            <person name="Mitsuhashi N."/>
            <person name="Mizobuchi K."/>
            <person name="Mori H."/>
            <person name="Nakade S."/>
            <person name="Nakamura Y."/>
            <person name="Nashimoto H."/>
            <person name="Oshima T."/>
            <person name="Oyama S."/>
            <person name="Saito N."/>
            <person name="Sampei G."/>
            <person name="Satoh Y."/>
            <person name="Sivasundaram S."/>
            <person name="Tagami H."/>
            <person name="Takahashi H."/>
            <person name="Takeda J."/>
            <person name="Takemoto K."/>
            <person name="Uehara K."/>
            <person name="Wada C."/>
            <person name="Yamagata S."/>
            <person name="Horiuchi T."/>
        </authorList>
    </citation>
    <scope>NUCLEOTIDE SEQUENCE [LARGE SCALE GENOMIC DNA]</scope>
    <source>
        <strain>K12 / W3110 / ATCC 27325 / DSM 5911</strain>
    </source>
</reference>
<reference key="3">
    <citation type="journal article" date="1997" name="Science">
        <title>The complete genome sequence of Escherichia coli K-12.</title>
        <authorList>
            <person name="Blattner F.R."/>
            <person name="Plunkett G. III"/>
            <person name="Bloch C.A."/>
            <person name="Perna N.T."/>
            <person name="Burland V."/>
            <person name="Riley M."/>
            <person name="Collado-Vides J."/>
            <person name="Glasner J.D."/>
            <person name="Rode C.K."/>
            <person name="Mayhew G.F."/>
            <person name="Gregor J."/>
            <person name="Davis N.W."/>
            <person name="Kirkpatrick H.A."/>
            <person name="Goeden M.A."/>
            <person name="Rose D.J."/>
            <person name="Mau B."/>
            <person name="Shao Y."/>
        </authorList>
    </citation>
    <scope>NUCLEOTIDE SEQUENCE [LARGE SCALE GENOMIC DNA]</scope>
    <source>
        <strain>K12 / MG1655 / ATCC 47076</strain>
    </source>
</reference>
<reference key="4">
    <citation type="journal article" date="2006" name="Mol. Syst. Biol.">
        <title>Highly accurate genome sequences of Escherichia coli K-12 strains MG1655 and W3110.</title>
        <authorList>
            <person name="Hayashi K."/>
            <person name="Morooka N."/>
            <person name="Yamamoto Y."/>
            <person name="Fujita K."/>
            <person name="Isono K."/>
            <person name="Choi S."/>
            <person name="Ohtsubo E."/>
            <person name="Baba T."/>
            <person name="Wanner B.L."/>
            <person name="Mori H."/>
            <person name="Horiuchi T."/>
        </authorList>
    </citation>
    <scope>NUCLEOTIDE SEQUENCE [LARGE SCALE GENOMIC DNA]</scope>
    <source>
        <strain>K12 / W3110 / ATCC 27325 / DSM 5911</strain>
    </source>
</reference>
<reference key="5">
    <citation type="journal article" date="2003" name="J. Biol. Chem.">
        <title>Origin of lipid A species modified with 4-amino-4-deoxy-L-arabinose in polymyxin-resistant mutants of Escherichia coli. An aminotransferase (ArnB) that generates UDP-4-deoxyl-L-arabinose.</title>
        <authorList>
            <person name="Breazeale S.D."/>
            <person name="Ribeiro A.A."/>
            <person name="Raetz C.R.H."/>
        </authorList>
    </citation>
    <scope>FUNCTION</scope>
    <scope>CATALYTIC ACTIVITY</scope>
    <source>
        <strain>K12 / W3110 / ATCC 27325 / DSM 5911</strain>
    </source>
</reference>
<reference key="6">
    <citation type="journal article" date="2007" name="J. Biol. Chem.">
        <title>An undecaprenyl phosphate-aminoarabinose flippase required for polymyxin resistance in Escherichia coli.</title>
        <authorList>
            <person name="Yan A."/>
            <person name="Guan Z."/>
            <person name="Raetz C.R.H."/>
        </authorList>
    </citation>
    <scope>PATHWAY</scope>
    <source>
        <strain>K12 / W3110 / ATCC 27325 / DSM 5911</strain>
    </source>
</reference>
<evidence type="ECO:0000250" key="1">
    <source>
        <dbReference type="UniProtKB" id="Q8ZNF3"/>
    </source>
</evidence>
<evidence type="ECO:0000269" key="2">
    <source>
    </source>
</evidence>
<evidence type="ECO:0000269" key="3">
    <source>
    </source>
</evidence>
<evidence type="ECO:0000305" key="4"/>
<keyword id="KW-0032">Aminotransferase</keyword>
<keyword id="KW-0046">Antibiotic resistance</keyword>
<keyword id="KW-0441">Lipid A biosynthesis</keyword>
<keyword id="KW-0444">Lipid biosynthesis</keyword>
<keyword id="KW-0443">Lipid metabolism</keyword>
<keyword id="KW-0448">Lipopolysaccharide biosynthesis</keyword>
<keyword id="KW-0663">Pyridoxal phosphate</keyword>
<keyword id="KW-1185">Reference proteome</keyword>
<keyword id="KW-0808">Transferase</keyword>